<keyword id="KW-0032">Aminotransferase</keyword>
<keyword id="KW-0663">Pyridoxal phosphate</keyword>
<keyword id="KW-0670">Pyruvate</keyword>
<keyword id="KW-0808">Transferase</keyword>
<dbReference type="EC" id="2.6.1.37" evidence="1"/>
<dbReference type="EMBL" id="AE017220">
    <property type="protein sequence ID" value="AAX64378.1"/>
    <property type="molecule type" value="Genomic_DNA"/>
</dbReference>
<dbReference type="RefSeq" id="WP_000203961.1">
    <property type="nucleotide sequence ID" value="NC_006905.1"/>
</dbReference>
<dbReference type="SMR" id="Q57SD3"/>
<dbReference type="KEGG" id="sec:SCH_0472"/>
<dbReference type="HOGENOM" id="CLU_027686_3_1_6"/>
<dbReference type="Proteomes" id="UP000000538">
    <property type="component" value="Chromosome"/>
</dbReference>
<dbReference type="GO" id="GO:0047304">
    <property type="term" value="F:2-aminoethylphosphonate-pyruvate transaminase activity"/>
    <property type="evidence" value="ECO:0007669"/>
    <property type="project" value="UniProtKB-UniRule"/>
</dbReference>
<dbReference type="GO" id="GO:0019700">
    <property type="term" value="P:organic phosphonate catabolic process"/>
    <property type="evidence" value="ECO:0007669"/>
    <property type="project" value="InterPro"/>
</dbReference>
<dbReference type="Gene3D" id="3.90.1150.10">
    <property type="entry name" value="Aspartate Aminotransferase, domain 1"/>
    <property type="match status" value="1"/>
</dbReference>
<dbReference type="Gene3D" id="3.40.640.10">
    <property type="entry name" value="Type I PLP-dependent aspartate aminotransferase-like (Major domain)"/>
    <property type="match status" value="1"/>
</dbReference>
<dbReference type="HAMAP" id="MF_01376">
    <property type="entry name" value="PhnW_aminotrans_5"/>
    <property type="match status" value="1"/>
</dbReference>
<dbReference type="InterPro" id="IPR000192">
    <property type="entry name" value="Aminotrans_V_dom"/>
</dbReference>
<dbReference type="InterPro" id="IPR012703">
    <property type="entry name" value="NH2EtPonate_pyrv_transaminase"/>
</dbReference>
<dbReference type="InterPro" id="IPR015424">
    <property type="entry name" value="PyrdxlP-dep_Trfase"/>
</dbReference>
<dbReference type="InterPro" id="IPR015421">
    <property type="entry name" value="PyrdxlP-dep_Trfase_major"/>
</dbReference>
<dbReference type="InterPro" id="IPR015422">
    <property type="entry name" value="PyrdxlP-dep_Trfase_small"/>
</dbReference>
<dbReference type="InterPro" id="IPR024169">
    <property type="entry name" value="SP_NH2Trfase/AEP_transaminase"/>
</dbReference>
<dbReference type="NCBIfam" id="TIGR03301">
    <property type="entry name" value="PhnW-AepZ"/>
    <property type="match status" value="1"/>
</dbReference>
<dbReference type="NCBIfam" id="NF010006">
    <property type="entry name" value="PRK13479.1"/>
    <property type="match status" value="1"/>
</dbReference>
<dbReference type="NCBIfam" id="TIGR02326">
    <property type="entry name" value="transamin_PhnW"/>
    <property type="match status" value="1"/>
</dbReference>
<dbReference type="PANTHER" id="PTHR42778">
    <property type="entry name" value="2-AMINOETHYLPHOSPHONATE--PYRUVATE TRANSAMINASE"/>
    <property type="match status" value="1"/>
</dbReference>
<dbReference type="PANTHER" id="PTHR42778:SF1">
    <property type="entry name" value="2-AMINOETHYLPHOSPHONATE--PYRUVATE TRANSAMINASE"/>
    <property type="match status" value="1"/>
</dbReference>
<dbReference type="Pfam" id="PF00266">
    <property type="entry name" value="Aminotran_5"/>
    <property type="match status" value="1"/>
</dbReference>
<dbReference type="PIRSF" id="PIRSF000524">
    <property type="entry name" value="SPT"/>
    <property type="match status" value="1"/>
</dbReference>
<dbReference type="SUPFAM" id="SSF53383">
    <property type="entry name" value="PLP-dependent transferases"/>
    <property type="match status" value="1"/>
</dbReference>
<gene>
    <name evidence="1" type="primary">phnW</name>
    <name type="ordered locus">SCH_0472</name>
</gene>
<feature type="chain" id="PRO_0000286784" description="2-aminoethylphosphonate--pyruvate transaminase">
    <location>
        <begin position="1"/>
        <end position="367"/>
    </location>
</feature>
<feature type="modified residue" description="N6-(pyridoxal phosphate)lysine" evidence="1">
    <location>
        <position position="194"/>
    </location>
</feature>
<comment type="function">
    <text evidence="1">Involved in phosphonate degradation.</text>
</comment>
<comment type="catalytic activity">
    <reaction evidence="1">
        <text>(2-aminoethyl)phosphonate + pyruvate = phosphonoacetaldehyde + L-alanine</text>
        <dbReference type="Rhea" id="RHEA:17021"/>
        <dbReference type="ChEBI" id="CHEBI:15361"/>
        <dbReference type="ChEBI" id="CHEBI:57418"/>
        <dbReference type="ChEBI" id="CHEBI:57972"/>
        <dbReference type="ChEBI" id="CHEBI:58383"/>
        <dbReference type="EC" id="2.6.1.37"/>
    </reaction>
</comment>
<comment type="cofactor">
    <cofactor evidence="1">
        <name>pyridoxal 5'-phosphate</name>
        <dbReference type="ChEBI" id="CHEBI:597326"/>
    </cofactor>
</comment>
<comment type="subunit">
    <text evidence="1">Homodimer.</text>
</comment>
<comment type="similarity">
    <text evidence="1">Belongs to the class-V pyridoxal-phosphate-dependent aminotransferase family. PhnW subfamily.</text>
</comment>
<protein>
    <recommendedName>
        <fullName evidence="1">2-aminoethylphosphonate--pyruvate transaminase</fullName>
        <ecNumber evidence="1">2.6.1.37</ecNumber>
    </recommendedName>
    <alternativeName>
        <fullName evidence="1">2-aminoethylphosphonate aminotransferase</fullName>
    </alternativeName>
    <alternativeName>
        <fullName evidence="1">AEP transaminase</fullName>
        <shortName evidence="1">AEPT</shortName>
    </alternativeName>
</protein>
<organism>
    <name type="scientific">Salmonella choleraesuis (strain SC-B67)</name>
    <dbReference type="NCBI Taxonomy" id="321314"/>
    <lineage>
        <taxon>Bacteria</taxon>
        <taxon>Pseudomonadati</taxon>
        <taxon>Pseudomonadota</taxon>
        <taxon>Gammaproteobacteria</taxon>
        <taxon>Enterobacterales</taxon>
        <taxon>Enterobacteriaceae</taxon>
        <taxon>Salmonella</taxon>
    </lineage>
</organism>
<sequence>MTSRNYLLLTPGPLTTSRTVKEAMLFDSCTWDDDYNIGVVEQIRQQLTALATASEGYTSVLLQGSGSYAVEAVLGSALGPQDKVLIVSNGAYGARMVEMAGLMGIAHHAYDCGEVARPDVQAIDAILNADPTISHIAMVHSETTTGMLNPIDEVGALAQRYDKTYIVDAMSSFGGIPMDIAALHIDYLISSANKCIQGVPGFAFVIAREQKLAACKGHSRSLSLDLYAQWRCMEDNHGKWRFTSPTHTVLAFAQALKELAEEGGVAARHQRYQQNQRSLVAGMRALGFNTLLDDELHSPIITAFYSPEDPQYRFSEFYRRLKEQGFVIYPGKVSQSDCFRIGNIGEVYAADITALLTAIRTAMYWTK</sequence>
<name>PHNW_SALCH</name>
<evidence type="ECO:0000255" key="1">
    <source>
        <dbReference type="HAMAP-Rule" id="MF_01376"/>
    </source>
</evidence>
<accession>Q57SD3</accession>
<reference key="1">
    <citation type="journal article" date="2005" name="Nucleic Acids Res.">
        <title>The genome sequence of Salmonella enterica serovar Choleraesuis, a highly invasive and resistant zoonotic pathogen.</title>
        <authorList>
            <person name="Chiu C.-H."/>
            <person name="Tang P."/>
            <person name="Chu C."/>
            <person name="Hu S."/>
            <person name="Bao Q."/>
            <person name="Yu J."/>
            <person name="Chou Y.-Y."/>
            <person name="Wang H.-S."/>
            <person name="Lee Y.-S."/>
        </authorList>
    </citation>
    <scope>NUCLEOTIDE SEQUENCE [LARGE SCALE GENOMIC DNA]</scope>
    <source>
        <strain>SC-B67</strain>
    </source>
</reference>
<proteinExistence type="inferred from homology"/>